<sequence length="184" mass="19027">MIVAVPNSGASRINQSGVEALREFPNFPIGGILFKDIAPMLAGRGALGEVVSTVASQVSGTEIDAILAVDARGFILGASLADRLGCGFIMVRKPGKLPGDVLSFEYSCEYCSGTLEVTAGLIGDGLRCLIADDLLATGGTARATGNFVKSQGGEIAGYAFILEIEVLKGRRQLDDAPVISAMTC</sequence>
<proteinExistence type="inferred from homology"/>
<feature type="chain" id="PRO_0000334716" description="Adenine phosphoribosyltransferase 2">
    <location>
        <begin position="1"/>
        <end position="184"/>
    </location>
</feature>
<geneLocation type="plasmid">
    <name>sym p42d</name>
</geneLocation>
<gene>
    <name evidence="1" type="primary">apt2</name>
    <name type="ordered locus">RHE_PD00341</name>
</gene>
<accession>Q8KKS1</accession>
<comment type="function">
    <text evidence="1">Catalyzes a salvage reaction resulting in the formation of AMP, that is energically less costly than de novo synthesis.</text>
</comment>
<comment type="catalytic activity">
    <reaction evidence="1">
        <text>AMP + diphosphate = 5-phospho-alpha-D-ribose 1-diphosphate + adenine</text>
        <dbReference type="Rhea" id="RHEA:16609"/>
        <dbReference type="ChEBI" id="CHEBI:16708"/>
        <dbReference type="ChEBI" id="CHEBI:33019"/>
        <dbReference type="ChEBI" id="CHEBI:58017"/>
        <dbReference type="ChEBI" id="CHEBI:456215"/>
        <dbReference type="EC" id="2.4.2.7"/>
    </reaction>
</comment>
<comment type="pathway">
    <text evidence="1">Purine metabolism; AMP biosynthesis via salvage pathway; AMP from adenine: step 1/1.</text>
</comment>
<comment type="subunit">
    <text evidence="1">Homodimer.</text>
</comment>
<comment type="subcellular location">
    <subcellularLocation>
        <location evidence="1">Cytoplasm</location>
    </subcellularLocation>
</comment>
<comment type="similarity">
    <text evidence="1">Belongs to the purine/pyrimidine phosphoribosyltransferase family.</text>
</comment>
<evidence type="ECO:0000255" key="1">
    <source>
        <dbReference type="HAMAP-Rule" id="MF_00004"/>
    </source>
</evidence>
<organism>
    <name type="scientific">Rhizobium etli (strain ATCC 51251 / DSM 11541 / JCM 21823 / NBRC 15573 / CFN 42)</name>
    <dbReference type="NCBI Taxonomy" id="347834"/>
    <lineage>
        <taxon>Bacteria</taxon>
        <taxon>Pseudomonadati</taxon>
        <taxon>Pseudomonadota</taxon>
        <taxon>Alphaproteobacteria</taxon>
        <taxon>Hyphomicrobiales</taxon>
        <taxon>Rhizobiaceae</taxon>
        <taxon>Rhizobium/Agrobacterium group</taxon>
        <taxon>Rhizobium</taxon>
    </lineage>
</organism>
<protein>
    <recommendedName>
        <fullName evidence="1">Adenine phosphoribosyltransferase 2</fullName>
        <shortName evidence="1">APRT 2</shortName>
        <ecNumber evidence="1">2.4.2.7</ecNumber>
    </recommendedName>
</protein>
<keyword id="KW-0963">Cytoplasm</keyword>
<keyword id="KW-0328">Glycosyltransferase</keyword>
<keyword id="KW-0614">Plasmid</keyword>
<keyword id="KW-0660">Purine salvage</keyword>
<keyword id="KW-1185">Reference proteome</keyword>
<keyword id="KW-0808">Transferase</keyword>
<dbReference type="EC" id="2.4.2.7" evidence="1"/>
<dbReference type="EMBL" id="U80928">
    <property type="protein sequence ID" value="AAM55053.2"/>
    <property type="molecule type" value="Genomic_DNA"/>
</dbReference>
<dbReference type="RefSeq" id="WP_004672710.1">
    <property type="nucleotide sequence ID" value="NC_004041.2"/>
</dbReference>
<dbReference type="SMR" id="Q8KKS1"/>
<dbReference type="KEGG" id="ret:RHE_PD00341"/>
<dbReference type="HOGENOM" id="CLU_063339_3_0_5"/>
<dbReference type="OrthoDB" id="9803963at2"/>
<dbReference type="UniPathway" id="UPA00588">
    <property type="reaction ID" value="UER00646"/>
</dbReference>
<dbReference type="Proteomes" id="UP000001936">
    <property type="component" value="Plasmid p42d"/>
</dbReference>
<dbReference type="GO" id="GO:0005737">
    <property type="term" value="C:cytoplasm"/>
    <property type="evidence" value="ECO:0007669"/>
    <property type="project" value="UniProtKB-SubCell"/>
</dbReference>
<dbReference type="GO" id="GO:0002055">
    <property type="term" value="F:adenine binding"/>
    <property type="evidence" value="ECO:0007669"/>
    <property type="project" value="TreeGrafter"/>
</dbReference>
<dbReference type="GO" id="GO:0003999">
    <property type="term" value="F:adenine phosphoribosyltransferase activity"/>
    <property type="evidence" value="ECO:0007669"/>
    <property type="project" value="UniProtKB-UniRule"/>
</dbReference>
<dbReference type="GO" id="GO:0016208">
    <property type="term" value="F:AMP binding"/>
    <property type="evidence" value="ECO:0007669"/>
    <property type="project" value="TreeGrafter"/>
</dbReference>
<dbReference type="GO" id="GO:0006168">
    <property type="term" value="P:adenine salvage"/>
    <property type="evidence" value="ECO:0007669"/>
    <property type="project" value="InterPro"/>
</dbReference>
<dbReference type="GO" id="GO:0044209">
    <property type="term" value="P:AMP salvage"/>
    <property type="evidence" value="ECO:0007669"/>
    <property type="project" value="UniProtKB-UniRule"/>
</dbReference>
<dbReference type="GO" id="GO:0006166">
    <property type="term" value="P:purine ribonucleoside salvage"/>
    <property type="evidence" value="ECO:0007669"/>
    <property type="project" value="UniProtKB-KW"/>
</dbReference>
<dbReference type="CDD" id="cd06223">
    <property type="entry name" value="PRTases_typeI"/>
    <property type="match status" value="1"/>
</dbReference>
<dbReference type="FunFam" id="3.40.50.2020:FF:000021">
    <property type="entry name" value="Adenine phosphoribosyltransferase"/>
    <property type="match status" value="1"/>
</dbReference>
<dbReference type="Gene3D" id="3.40.50.2020">
    <property type="match status" value="1"/>
</dbReference>
<dbReference type="HAMAP" id="MF_00004">
    <property type="entry name" value="Aden_phosphoribosyltr"/>
    <property type="match status" value="1"/>
</dbReference>
<dbReference type="InterPro" id="IPR005764">
    <property type="entry name" value="Ade_phspho_trans"/>
</dbReference>
<dbReference type="InterPro" id="IPR000836">
    <property type="entry name" value="PRibTrfase_dom"/>
</dbReference>
<dbReference type="InterPro" id="IPR029057">
    <property type="entry name" value="PRTase-like"/>
</dbReference>
<dbReference type="InterPro" id="IPR050054">
    <property type="entry name" value="UPRTase/APRTase"/>
</dbReference>
<dbReference type="NCBIfam" id="NF002636">
    <property type="entry name" value="PRK02304.1-5"/>
    <property type="match status" value="1"/>
</dbReference>
<dbReference type="PANTHER" id="PTHR32315">
    <property type="entry name" value="ADENINE PHOSPHORIBOSYLTRANSFERASE"/>
    <property type="match status" value="1"/>
</dbReference>
<dbReference type="PANTHER" id="PTHR32315:SF3">
    <property type="entry name" value="ADENINE PHOSPHORIBOSYLTRANSFERASE"/>
    <property type="match status" value="1"/>
</dbReference>
<dbReference type="Pfam" id="PF00156">
    <property type="entry name" value="Pribosyltran"/>
    <property type="match status" value="1"/>
</dbReference>
<dbReference type="SUPFAM" id="SSF53271">
    <property type="entry name" value="PRTase-like"/>
    <property type="match status" value="1"/>
</dbReference>
<name>APT2_RHIEC</name>
<reference key="1">
    <citation type="journal article" date="2003" name="Genome Biol.">
        <title>The mosaic structure of the symbiotic plasmid of Rhizobium etli CFN42 and its relation to other symbiotic genome compartments.</title>
        <authorList>
            <person name="Gonzalez V."/>
            <person name="Bustos P."/>
            <person name="Ramirez-Romero M.A."/>
            <person name="Medrano-Soto A."/>
            <person name="Salgado H."/>
            <person name="Hernandez-Gonzalez I."/>
            <person name="Hernandez-Celis J.C."/>
            <person name="Quintero V."/>
            <person name="Moreno-Hagelsieb G."/>
            <person name="Girard L."/>
            <person name="Rodriguez O."/>
            <person name="Flores M."/>
            <person name="Cevallos M.A."/>
            <person name="Collado-Vides J."/>
            <person name="Romero D."/>
            <person name="Davila G."/>
        </authorList>
    </citation>
    <scope>NUCLEOTIDE SEQUENCE [LARGE SCALE GENOMIC DNA]</scope>
    <source>
        <strain>ATCC 51251 / DSM 11541 / JCM 21823 / NBRC 15573 / CFN 42</strain>
    </source>
</reference>
<reference key="2">
    <citation type="journal article" date="2006" name="Proc. Natl. Acad. Sci. U.S.A.">
        <title>The partitioned Rhizobium etli genome: genetic and metabolic redundancy in seven interacting replicons.</title>
        <authorList>
            <person name="Gonzalez V."/>
            <person name="Santamaria R.I."/>
            <person name="Bustos P."/>
            <person name="Hernandez-Gonzalez I."/>
            <person name="Medrano-Soto A."/>
            <person name="Moreno-Hagelsieb G."/>
            <person name="Janga S.C."/>
            <person name="Ramirez M.A."/>
            <person name="Jimenez-Jacinto V."/>
            <person name="Collado-Vides J."/>
            <person name="Davila G."/>
        </authorList>
    </citation>
    <scope>NUCLEOTIDE SEQUENCE [LARGE SCALE GENOMIC DNA]</scope>
    <source>
        <strain>ATCC 51251 / DSM 11541 / JCM 21823 / NBRC 15573 / CFN 42</strain>
    </source>
</reference>